<comment type="function">
    <text evidence="1">Non-catalytic subunit of AMP-activated protein kinase (AMPK), an energy sensor protein kinase that plays a key role in regulating cellular energy metabolism. In response to reduction of intracellular ATP levels, AMPK activates energy-producing pathways and inhibits energy-consuming processes: inhibits protein, carbohydrate and lipid biosynthesis, as well as cell growth and proliferation. AMPK acts via direct phosphorylation of metabolic enzymes, and by longer-term effects via phosphorylation of transcription regulators. Also acts as a regulator of cellular polarity by remodeling the actin cytoskeleton; probably by indirectly activating myosin. Beta non-catalytic subunit acts as a scaffold on which the AMPK complex assembles, via its C-terminus that bridges alpha (PRKAA1 or PRKAA2) and gamma subunits (PRKAG1, PRKAG2 or PRKAG3) (By similarity).</text>
</comment>
<comment type="subunit">
    <text evidence="1">AMPK is a heterotrimer of an alpha catalytic subunit (PRKAA1 or PRKAA2), a beta (PRKAB1 or PRKAB2) and a gamma non-catalytic subunits (PRKAG1, PRKAG2 or PRKAG3).</text>
</comment>
<comment type="PTM">
    <text evidence="4 5">Phosphorylated when associated with the catalytic subunit (PRKAA1 or PRKAA2). Phosphorylated by ULK1 and ULK2; leading to negatively regulate AMPK activity and suggesting the existence of a regulatory feedback loop between ULK1, ULK2 and AMPK.</text>
</comment>
<comment type="similarity">
    <text evidence="6">Belongs to the 5'-AMP-activated protein kinase beta subunit family.</text>
</comment>
<reference key="1">
    <citation type="journal article" date="1999" name="FEBS Lett.">
        <title>Expression of the AMP-activated protein kinase beta1 and beta2 subunits in skeletal muscle.</title>
        <authorList>
            <person name="Chen Z."/>
            <person name="Heierhorst J."/>
            <person name="Mann R.J."/>
            <person name="Mitchelhill K.I."/>
            <person name="Michell B.J."/>
            <person name="Witters L.A."/>
            <person name="Lynch G.S."/>
            <person name="Kemp B.E."/>
            <person name="Stapleton D."/>
        </authorList>
    </citation>
    <scope>NUCLEOTIDE SEQUENCE [MRNA]</scope>
    <scope>PHOSPHORYLATION AT SER-183</scope>
    <source>
        <strain>Sprague-Dawley</strain>
        <tissue>Skeletal muscle</tissue>
    </source>
</reference>
<reference key="2">
    <citation type="journal article" date="2011" name="Autophagy">
        <title>Ulk1-mediated phosphorylation of AMPK constitutes a negative regulatory feedback loop.</title>
        <authorList>
            <person name="Loffler A.S."/>
            <person name="Alers S."/>
            <person name="Dieterle A.M."/>
            <person name="Keppeler H."/>
            <person name="Franz-Wachtel M."/>
            <person name="Kundu M."/>
            <person name="Campbell D.G."/>
            <person name="Wesselborg S."/>
            <person name="Alessi D.R."/>
            <person name="Stork B."/>
        </authorList>
    </citation>
    <scope>PHOSPHORYLATION BY ULK1 AND ULK2</scope>
    <scope>PHOSPHORYLATION AT SER-38; THR-39; SER-68 AND SER-173</scope>
</reference>
<reference key="3">
    <citation type="journal article" date="2012" name="Nat. Commun.">
        <title>Quantitative maps of protein phosphorylation sites across 14 different rat organs and tissues.</title>
        <authorList>
            <person name="Lundby A."/>
            <person name="Secher A."/>
            <person name="Lage K."/>
            <person name="Nordsborg N.B."/>
            <person name="Dmytriyev A."/>
            <person name="Lundby C."/>
            <person name="Olsen J.V."/>
        </authorList>
    </citation>
    <scope>PHOSPHORYLATION [LARGE SCALE ANALYSIS] AT SER-38</scope>
    <scope>IDENTIFICATION BY MASS SPECTROMETRY [LARGE SCALE ANALYSIS]</scope>
</reference>
<gene>
    <name type="primary">Prkab2</name>
</gene>
<sequence>MGNTTSERVSGERHGAKAARAEGGGHGPGKEHKIMVGSTDDPSVFSLPDSKLPGDKEFVPWQQDLDDSVKPTQQARPTVIRWSEGGKEVFISGSFNNWSTKIPLIKSHNDFVAILDLPEGEHQYKFFVDGQWVHDPSEPVVTSQLGTINNLIHVKKSDFEVFDALKLDSMESSETSCRDLSSSPPGPYGQEMYVFRSEERFKSPPILPPHLLQVILNKDTNISCDPALLPEPNHVMLNHLYALSTKDSVMVLSATHRYKKKYVTTLLYKPI</sequence>
<keyword id="KW-0002">3D-structure</keyword>
<keyword id="KW-0275">Fatty acid biosynthesis</keyword>
<keyword id="KW-0276">Fatty acid metabolism</keyword>
<keyword id="KW-0444">Lipid biosynthesis</keyword>
<keyword id="KW-0443">Lipid metabolism</keyword>
<keyword id="KW-0597">Phosphoprotein</keyword>
<keyword id="KW-1185">Reference proteome</keyword>
<accession>Q9QZH4</accession>
<name>AAKB2_RAT</name>
<proteinExistence type="evidence at protein level"/>
<feature type="chain" id="PRO_0000204370" description="5'-AMP-activated protein kinase subunit beta-2">
    <location>
        <begin position="1"/>
        <end position="271"/>
    </location>
</feature>
<feature type="region of interest" description="Disordered" evidence="3">
    <location>
        <begin position="1"/>
        <end position="47"/>
    </location>
</feature>
<feature type="modified residue" description="Phosphoserine; by ULK1" evidence="5 7">
    <location>
        <position position="38"/>
    </location>
</feature>
<feature type="modified residue" description="Phosphothreonine; by ULK1" evidence="5">
    <location>
        <position position="39"/>
    </location>
</feature>
<feature type="modified residue" description="Phosphoserine; by ULK1" evidence="5">
    <location>
        <position position="68"/>
    </location>
</feature>
<feature type="modified residue" description="Phosphoserine" evidence="2">
    <location>
        <position position="94"/>
    </location>
</feature>
<feature type="modified residue" description="Phosphoserine" evidence="2">
    <location>
        <position position="107"/>
    </location>
</feature>
<feature type="modified residue" description="Phosphothreonine" evidence="2">
    <location>
        <position position="147"/>
    </location>
</feature>
<feature type="modified residue" description="Phosphoserine" evidence="2">
    <location>
        <position position="157"/>
    </location>
</feature>
<feature type="modified residue" description="Phosphoserine" evidence="2">
    <location>
        <position position="169"/>
    </location>
</feature>
<feature type="modified residue" description="Phosphoserine; by ULK1" evidence="5">
    <location>
        <position position="173"/>
    </location>
</feature>
<feature type="modified residue" description="Phosphoserine" evidence="4">
    <location>
        <position position="183"/>
    </location>
</feature>
<feature type="strand" evidence="9">
    <location>
        <begin position="73"/>
        <end position="75"/>
    </location>
</feature>
<feature type="strand" evidence="10">
    <location>
        <begin position="76"/>
        <end position="82"/>
    </location>
</feature>
<feature type="strand" evidence="10">
    <location>
        <begin position="89"/>
        <end position="93"/>
    </location>
</feature>
<feature type="helix" evidence="10">
    <location>
        <begin position="94"/>
        <end position="96"/>
    </location>
</feature>
<feature type="strand" evidence="10">
    <location>
        <begin position="105"/>
        <end position="107"/>
    </location>
</feature>
<feature type="strand" evidence="10">
    <location>
        <begin position="110"/>
        <end position="117"/>
    </location>
</feature>
<feature type="strand" evidence="10">
    <location>
        <begin position="119"/>
        <end position="128"/>
    </location>
</feature>
<feature type="strand" evidence="10">
    <location>
        <begin position="131"/>
        <end position="133"/>
    </location>
</feature>
<feature type="strand" evidence="8">
    <location>
        <begin position="136"/>
        <end position="138"/>
    </location>
</feature>
<feature type="strand" evidence="10">
    <location>
        <begin position="140"/>
        <end position="142"/>
    </location>
</feature>
<feature type="strand" evidence="10">
    <location>
        <begin position="148"/>
        <end position="154"/>
    </location>
</feature>
<feature type="strand" evidence="8">
    <location>
        <begin position="157"/>
        <end position="160"/>
    </location>
</feature>
<organism>
    <name type="scientific">Rattus norvegicus</name>
    <name type="common">Rat</name>
    <dbReference type="NCBI Taxonomy" id="10116"/>
    <lineage>
        <taxon>Eukaryota</taxon>
        <taxon>Metazoa</taxon>
        <taxon>Chordata</taxon>
        <taxon>Craniata</taxon>
        <taxon>Vertebrata</taxon>
        <taxon>Euteleostomi</taxon>
        <taxon>Mammalia</taxon>
        <taxon>Eutheria</taxon>
        <taxon>Euarchontoglires</taxon>
        <taxon>Glires</taxon>
        <taxon>Rodentia</taxon>
        <taxon>Myomorpha</taxon>
        <taxon>Muroidea</taxon>
        <taxon>Muridae</taxon>
        <taxon>Murinae</taxon>
        <taxon>Rattus</taxon>
    </lineage>
</organism>
<dbReference type="EMBL" id="AF182717">
    <property type="protein sequence ID" value="AAF01293.1"/>
    <property type="molecule type" value="mRNA"/>
</dbReference>
<dbReference type="RefSeq" id="NP_072149.1">
    <property type="nucleotide sequence ID" value="NM_022627.2"/>
</dbReference>
<dbReference type="PDB" id="2LU3">
    <property type="method" value="NMR"/>
    <property type="chains" value="A=67-163"/>
</dbReference>
<dbReference type="PDB" id="2LU4">
    <property type="method" value="NMR"/>
    <property type="chains" value="A=67-163"/>
</dbReference>
<dbReference type="PDB" id="4Y0G">
    <property type="method" value="X-ray"/>
    <property type="resolution" value="1.60 A"/>
    <property type="chains" value="A/B=74-155"/>
</dbReference>
<dbReference type="PDB" id="4YEE">
    <property type="method" value="X-ray"/>
    <property type="resolution" value="2.00 A"/>
    <property type="chains" value="A/B/C/D/E/F/G/H/I/J/K/L/M/N/O/P/Q/R=74-155"/>
</dbReference>
<dbReference type="PDBsum" id="2LU3"/>
<dbReference type="PDBsum" id="2LU4"/>
<dbReference type="PDBsum" id="4Y0G"/>
<dbReference type="PDBsum" id="4YEE"/>
<dbReference type="BMRB" id="Q9QZH4"/>
<dbReference type="SMR" id="Q9QZH4"/>
<dbReference type="FunCoup" id="Q9QZH4">
    <property type="interactions" value="1700"/>
</dbReference>
<dbReference type="STRING" id="10116.ENSRNOP00000069519"/>
<dbReference type="BindingDB" id="Q9QZH4"/>
<dbReference type="ChEMBL" id="CHEMBL4523617"/>
<dbReference type="CAZy" id="CBM48">
    <property type="family name" value="Carbohydrate-Binding Module Family 48"/>
</dbReference>
<dbReference type="iPTMnet" id="Q9QZH4"/>
<dbReference type="PhosphoSitePlus" id="Q9QZH4"/>
<dbReference type="PaxDb" id="10116-ENSRNOP00000062137"/>
<dbReference type="DNASU" id="64562"/>
<dbReference type="GeneID" id="64562"/>
<dbReference type="KEGG" id="rno:64562"/>
<dbReference type="AGR" id="RGD:620905"/>
<dbReference type="CTD" id="5565"/>
<dbReference type="RGD" id="620905">
    <property type="gene designation" value="Prkab2"/>
</dbReference>
<dbReference type="eggNOG" id="KOG1616">
    <property type="taxonomic scope" value="Eukaryota"/>
</dbReference>
<dbReference type="InParanoid" id="Q9QZH4"/>
<dbReference type="OrthoDB" id="531008at2759"/>
<dbReference type="PhylomeDB" id="Q9QZH4"/>
<dbReference type="BRENDA" id="2.7.11.31">
    <property type="organism ID" value="5301"/>
</dbReference>
<dbReference type="Reactome" id="R-RNO-1632852">
    <property type="pathway name" value="Macroautophagy"/>
</dbReference>
<dbReference type="Reactome" id="R-RNO-163680">
    <property type="pathway name" value="AMPK inhibits chREBP transcriptional activation activity"/>
</dbReference>
<dbReference type="Reactome" id="R-RNO-200425">
    <property type="pathway name" value="Carnitine shuttle"/>
</dbReference>
<dbReference type="Reactome" id="R-RNO-380972">
    <property type="pathway name" value="Energy dependent regulation of mTOR by LKB1-AMPK"/>
</dbReference>
<dbReference type="Reactome" id="R-RNO-5628897">
    <property type="pathway name" value="TP53 Regulates Metabolic Genes"/>
</dbReference>
<dbReference type="Reactome" id="R-RNO-6804756">
    <property type="pathway name" value="Regulation of TP53 Activity through Phosphorylation"/>
</dbReference>
<dbReference type="PRO" id="PR:Q9QZH4"/>
<dbReference type="Proteomes" id="UP000002494">
    <property type="component" value="Unplaced"/>
</dbReference>
<dbReference type="GO" id="GO:0016324">
    <property type="term" value="C:apical plasma membrane"/>
    <property type="evidence" value="ECO:0000314"/>
    <property type="project" value="UniProtKB"/>
</dbReference>
<dbReference type="GO" id="GO:0005952">
    <property type="term" value="C:cAMP-dependent protein kinase complex"/>
    <property type="evidence" value="ECO:0000314"/>
    <property type="project" value="RGD"/>
</dbReference>
<dbReference type="GO" id="GO:0005737">
    <property type="term" value="C:cytoplasm"/>
    <property type="evidence" value="ECO:0000314"/>
    <property type="project" value="UniProtKB"/>
</dbReference>
<dbReference type="GO" id="GO:0005654">
    <property type="term" value="C:nucleoplasm"/>
    <property type="evidence" value="ECO:0000304"/>
    <property type="project" value="Reactome"/>
</dbReference>
<dbReference type="GO" id="GO:0031588">
    <property type="term" value="C:nucleotide-activated protein kinase complex"/>
    <property type="evidence" value="ECO:0000314"/>
    <property type="project" value="RGD"/>
</dbReference>
<dbReference type="GO" id="GO:0005634">
    <property type="term" value="C:nucleus"/>
    <property type="evidence" value="ECO:0000318"/>
    <property type="project" value="GO_Central"/>
</dbReference>
<dbReference type="GO" id="GO:0019899">
    <property type="term" value="F:enzyme binding"/>
    <property type="evidence" value="ECO:0000353"/>
    <property type="project" value="RGD"/>
</dbReference>
<dbReference type="GO" id="GO:0019901">
    <property type="term" value="F:protein kinase binding"/>
    <property type="evidence" value="ECO:0000353"/>
    <property type="project" value="RGD"/>
</dbReference>
<dbReference type="GO" id="GO:0031669">
    <property type="term" value="P:cellular response to nutrient levels"/>
    <property type="evidence" value="ECO:0000266"/>
    <property type="project" value="RGD"/>
</dbReference>
<dbReference type="GO" id="GO:0006633">
    <property type="term" value="P:fatty acid biosynthetic process"/>
    <property type="evidence" value="ECO:0007669"/>
    <property type="project" value="UniProtKB-KW"/>
</dbReference>
<dbReference type="GO" id="GO:0120162">
    <property type="term" value="P:positive regulation of cold-induced thermogenesis"/>
    <property type="evidence" value="ECO:0000250"/>
    <property type="project" value="YuBioLab"/>
</dbReference>
<dbReference type="GO" id="GO:0007165">
    <property type="term" value="P:signal transduction"/>
    <property type="evidence" value="ECO:0000318"/>
    <property type="project" value="GO_Central"/>
</dbReference>
<dbReference type="CDD" id="cd02859">
    <property type="entry name" value="E_set_AMPKbeta_like_N"/>
    <property type="match status" value="1"/>
</dbReference>
<dbReference type="FunFam" id="2.60.40.10:FF:000139">
    <property type="entry name" value="Protein kinase AMP-activated non-catalytic subunit beta 1"/>
    <property type="match status" value="1"/>
</dbReference>
<dbReference type="Gene3D" id="6.20.250.60">
    <property type="match status" value="1"/>
</dbReference>
<dbReference type="Gene3D" id="2.60.40.10">
    <property type="entry name" value="Immunoglobulins"/>
    <property type="match status" value="1"/>
</dbReference>
<dbReference type="InterPro" id="IPR032640">
    <property type="entry name" value="AMPK1_CBM"/>
</dbReference>
<dbReference type="InterPro" id="IPR006828">
    <property type="entry name" value="ASC_dom"/>
</dbReference>
<dbReference type="InterPro" id="IPR037256">
    <property type="entry name" value="ASC_dom_sf"/>
</dbReference>
<dbReference type="InterPro" id="IPR050827">
    <property type="entry name" value="CRP1_MDG1_kinase"/>
</dbReference>
<dbReference type="InterPro" id="IPR013783">
    <property type="entry name" value="Ig-like_fold"/>
</dbReference>
<dbReference type="InterPro" id="IPR014756">
    <property type="entry name" value="Ig_E-set"/>
</dbReference>
<dbReference type="PANTHER" id="PTHR10343">
    <property type="entry name" value="5'-AMP-ACTIVATED PROTEIN KINASE , BETA SUBUNIT"/>
    <property type="match status" value="1"/>
</dbReference>
<dbReference type="PANTHER" id="PTHR10343:SF92">
    <property type="entry name" value="5'-AMP-ACTIVATED PROTEIN KINASE SUBUNIT BETA-2"/>
    <property type="match status" value="1"/>
</dbReference>
<dbReference type="Pfam" id="PF16561">
    <property type="entry name" value="AMPK1_CBM"/>
    <property type="match status" value="1"/>
</dbReference>
<dbReference type="Pfam" id="PF04739">
    <property type="entry name" value="AMPKBI"/>
    <property type="match status" value="1"/>
</dbReference>
<dbReference type="SMART" id="SM01010">
    <property type="entry name" value="AMPKBI"/>
    <property type="match status" value="1"/>
</dbReference>
<dbReference type="SUPFAM" id="SSF160219">
    <property type="entry name" value="AMPKBI-like"/>
    <property type="match status" value="1"/>
</dbReference>
<dbReference type="SUPFAM" id="SSF81296">
    <property type="entry name" value="E set domains"/>
    <property type="match status" value="1"/>
</dbReference>
<protein>
    <recommendedName>
        <fullName>5'-AMP-activated protein kinase subunit beta-2</fullName>
        <shortName>AMPK subunit beta-2</shortName>
    </recommendedName>
</protein>
<evidence type="ECO:0000250" key="1"/>
<evidence type="ECO:0000250" key="2">
    <source>
        <dbReference type="UniProtKB" id="O43741"/>
    </source>
</evidence>
<evidence type="ECO:0000256" key="3">
    <source>
        <dbReference type="SAM" id="MobiDB-lite"/>
    </source>
</evidence>
<evidence type="ECO:0000269" key="4">
    <source>
    </source>
</evidence>
<evidence type="ECO:0000269" key="5">
    <source>
    </source>
</evidence>
<evidence type="ECO:0000305" key="6"/>
<evidence type="ECO:0007744" key="7">
    <source>
    </source>
</evidence>
<evidence type="ECO:0007829" key="8">
    <source>
        <dbReference type="PDB" id="2LU3"/>
    </source>
</evidence>
<evidence type="ECO:0007829" key="9">
    <source>
        <dbReference type="PDB" id="2LU4"/>
    </source>
</evidence>
<evidence type="ECO:0007829" key="10">
    <source>
        <dbReference type="PDB" id="4Y0G"/>
    </source>
</evidence>